<accession>Q58F21</accession>
<accession>A6NF68</accession>
<accession>B7Z811</accession>
<accession>B7Z890</accession>
<accession>B7ZAX7</accession>
<accession>D3DT32</accession>
<accession>O14789</accession>
<accession>Q05DQ4</accession>
<accession>Q6P5T1</accession>
<accession>Q7Z4A6</accession>
<accession>Q8IWI6</accession>
<reference key="1">
    <citation type="journal article" date="1997" name="Genomics">
        <title>Identification and characterization of BRDT: a testis-specific gene related to the bromodomain genes RING3 and Drosophila fsh.</title>
        <authorList>
            <person name="Jones M.H."/>
            <person name="Numata M."/>
            <person name="Shimane M."/>
        </authorList>
    </citation>
    <scope>NUCLEOTIDE SEQUENCE [MRNA] (ISOFORM 1)</scope>
    <scope>FUNCTION</scope>
    <scope>TISSUE SPECIFICITY</scope>
    <scope>VARIANTS LYS-62 AND LEU-696</scope>
</reference>
<reference key="2">
    <citation type="journal article" date="2005" name="Int. J. Mol. Med.">
        <title>Molecular cloning and expression of a novel alternative splice variant of BRDT gene.</title>
        <authorList>
            <person name="Zheng Y."/>
            <person name="Yuan W."/>
            <person name="Zhou Z."/>
            <person name="Xu M."/>
            <person name="Sha J.-H."/>
        </authorList>
    </citation>
    <scope>NUCLEOTIDE SEQUENCE [MRNA] (ISOFORM 2)</scope>
    <scope>FUNCTION</scope>
    <scope>ALTERNATIVE SPLICING</scope>
    <scope>TISSUE SPECIFICITY</scope>
    <scope>VARIANTS LYS-62 AND LEU-696</scope>
    <source>
        <tissue>Testis</tissue>
    </source>
</reference>
<reference key="3">
    <citation type="journal article" date="2004" name="Nat. Genet.">
        <title>Complete sequencing and characterization of 21,243 full-length human cDNAs.</title>
        <authorList>
            <person name="Ota T."/>
            <person name="Suzuki Y."/>
            <person name="Nishikawa T."/>
            <person name="Otsuki T."/>
            <person name="Sugiyama T."/>
            <person name="Irie R."/>
            <person name="Wakamatsu A."/>
            <person name="Hayashi K."/>
            <person name="Sato H."/>
            <person name="Nagai K."/>
            <person name="Kimura K."/>
            <person name="Makita H."/>
            <person name="Sekine M."/>
            <person name="Obayashi M."/>
            <person name="Nishi T."/>
            <person name="Shibahara T."/>
            <person name="Tanaka T."/>
            <person name="Ishii S."/>
            <person name="Yamamoto J."/>
            <person name="Saito K."/>
            <person name="Kawai Y."/>
            <person name="Isono Y."/>
            <person name="Nakamura Y."/>
            <person name="Nagahari K."/>
            <person name="Murakami K."/>
            <person name="Yasuda T."/>
            <person name="Iwayanagi T."/>
            <person name="Wagatsuma M."/>
            <person name="Shiratori A."/>
            <person name="Sudo H."/>
            <person name="Hosoiri T."/>
            <person name="Kaku Y."/>
            <person name="Kodaira H."/>
            <person name="Kondo H."/>
            <person name="Sugawara M."/>
            <person name="Takahashi M."/>
            <person name="Kanda K."/>
            <person name="Yokoi T."/>
            <person name="Furuya T."/>
            <person name="Kikkawa E."/>
            <person name="Omura Y."/>
            <person name="Abe K."/>
            <person name="Kamihara K."/>
            <person name="Katsuta N."/>
            <person name="Sato K."/>
            <person name="Tanikawa M."/>
            <person name="Yamazaki M."/>
            <person name="Ninomiya K."/>
            <person name="Ishibashi T."/>
            <person name="Yamashita H."/>
            <person name="Murakawa K."/>
            <person name="Fujimori K."/>
            <person name="Tanai H."/>
            <person name="Kimata M."/>
            <person name="Watanabe M."/>
            <person name="Hiraoka S."/>
            <person name="Chiba Y."/>
            <person name="Ishida S."/>
            <person name="Ono Y."/>
            <person name="Takiguchi S."/>
            <person name="Watanabe S."/>
            <person name="Yosida M."/>
            <person name="Hotuta T."/>
            <person name="Kusano J."/>
            <person name="Kanehori K."/>
            <person name="Takahashi-Fujii A."/>
            <person name="Hara H."/>
            <person name="Tanase T.-O."/>
            <person name="Nomura Y."/>
            <person name="Togiya S."/>
            <person name="Komai F."/>
            <person name="Hara R."/>
            <person name="Takeuchi K."/>
            <person name="Arita M."/>
            <person name="Imose N."/>
            <person name="Musashino K."/>
            <person name="Yuuki H."/>
            <person name="Oshima A."/>
            <person name="Sasaki N."/>
            <person name="Aotsuka S."/>
            <person name="Yoshikawa Y."/>
            <person name="Matsunawa H."/>
            <person name="Ichihara T."/>
            <person name="Shiohata N."/>
            <person name="Sano S."/>
            <person name="Moriya S."/>
            <person name="Momiyama H."/>
            <person name="Satoh N."/>
            <person name="Takami S."/>
            <person name="Terashima Y."/>
            <person name="Suzuki O."/>
            <person name="Nakagawa S."/>
            <person name="Senoh A."/>
            <person name="Mizoguchi H."/>
            <person name="Goto Y."/>
            <person name="Shimizu F."/>
            <person name="Wakebe H."/>
            <person name="Hishigaki H."/>
            <person name="Watanabe T."/>
            <person name="Sugiyama A."/>
            <person name="Takemoto M."/>
            <person name="Kawakami B."/>
            <person name="Yamazaki M."/>
            <person name="Watanabe K."/>
            <person name="Kumagai A."/>
            <person name="Itakura S."/>
            <person name="Fukuzumi Y."/>
            <person name="Fujimori Y."/>
            <person name="Komiyama M."/>
            <person name="Tashiro H."/>
            <person name="Tanigami A."/>
            <person name="Fujiwara T."/>
            <person name="Ono T."/>
            <person name="Yamada K."/>
            <person name="Fujii Y."/>
            <person name="Ozaki K."/>
            <person name="Hirao M."/>
            <person name="Ohmori Y."/>
            <person name="Kawabata A."/>
            <person name="Hikiji T."/>
            <person name="Kobatake N."/>
            <person name="Inagaki H."/>
            <person name="Ikema Y."/>
            <person name="Okamoto S."/>
            <person name="Okitani R."/>
            <person name="Kawakami T."/>
            <person name="Noguchi S."/>
            <person name="Itoh T."/>
            <person name="Shigeta K."/>
            <person name="Senba T."/>
            <person name="Matsumura K."/>
            <person name="Nakajima Y."/>
            <person name="Mizuno T."/>
            <person name="Morinaga M."/>
            <person name="Sasaki M."/>
            <person name="Togashi T."/>
            <person name="Oyama M."/>
            <person name="Hata H."/>
            <person name="Watanabe M."/>
            <person name="Komatsu T."/>
            <person name="Mizushima-Sugano J."/>
            <person name="Satoh T."/>
            <person name="Shirai Y."/>
            <person name="Takahashi Y."/>
            <person name="Nakagawa K."/>
            <person name="Okumura K."/>
            <person name="Nagase T."/>
            <person name="Nomura N."/>
            <person name="Kikuchi H."/>
            <person name="Masuho Y."/>
            <person name="Yamashita R."/>
            <person name="Nakai K."/>
            <person name="Yada T."/>
            <person name="Nakamura Y."/>
            <person name="Ohara O."/>
            <person name="Isogai T."/>
            <person name="Sugano S."/>
        </authorList>
    </citation>
    <scope>NUCLEOTIDE SEQUENCE [LARGE SCALE MRNA] (ISOFORMS 3 AND 4)</scope>
    <scope>VARIANTS LYS-62 AND LEU-696</scope>
    <source>
        <tissue>Testis</tissue>
    </source>
</reference>
<reference key="4">
    <citation type="journal article" date="2006" name="Nature">
        <title>The DNA sequence and biological annotation of human chromosome 1.</title>
        <authorList>
            <person name="Gregory S.G."/>
            <person name="Barlow K.F."/>
            <person name="McLay K.E."/>
            <person name="Kaul R."/>
            <person name="Swarbreck D."/>
            <person name="Dunham A."/>
            <person name="Scott C.E."/>
            <person name="Howe K.L."/>
            <person name="Woodfine K."/>
            <person name="Spencer C.C.A."/>
            <person name="Jones M.C."/>
            <person name="Gillson C."/>
            <person name="Searle S."/>
            <person name="Zhou Y."/>
            <person name="Kokocinski F."/>
            <person name="McDonald L."/>
            <person name="Evans R."/>
            <person name="Phillips K."/>
            <person name="Atkinson A."/>
            <person name="Cooper R."/>
            <person name="Jones C."/>
            <person name="Hall R.E."/>
            <person name="Andrews T.D."/>
            <person name="Lloyd C."/>
            <person name="Ainscough R."/>
            <person name="Almeida J.P."/>
            <person name="Ambrose K.D."/>
            <person name="Anderson F."/>
            <person name="Andrew R.W."/>
            <person name="Ashwell R.I.S."/>
            <person name="Aubin K."/>
            <person name="Babbage A.K."/>
            <person name="Bagguley C.L."/>
            <person name="Bailey J."/>
            <person name="Beasley H."/>
            <person name="Bethel G."/>
            <person name="Bird C.P."/>
            <person name="Bray-Allen S."/>
            <person name="Brown J.Y."/>
            <person name="Brown A.J."/>
            <person name="Buckley D."/>
            <person name="Burton J."/>
            <person name="Bye J."/>
            <person name="Carder C."/>
            <person name="Chapman J.C."/>
            <person name="Clark S.Y."/>
            <person name="Clarke G."/>
            <person name="Clee C."/>
            <person name="Cobley V."/>
            <person name="Collier R.E."/>
            <person name="Corby N."/>
            <person name="Coville G.J."/>
            <person name="Davies J."/>
            <person name="Deadman R."/>
            <person name="Dunn M."/>
            <person name="Earthrowl M."/>
            <person name="Ellington A.G."/>
            <person name="Errington H."/>
            <person name="Frankish A."/>
            <person name="Frankland J."/>
            <person name="French L."/>
            <person name="Garner P."/>
            <person name="Garnett J."/>
            <person name="Gay L."/>
            <person name="Ghori M.R.J."/>
            <person name="Gibson R."/>
            <person name="Gilby L.M."/>
            <person name="Gillett W."/>
            <person name="Glithero R.J."/>
            <person name="Grafham D.V."/>
            <person name="Griffiths C."/>
            <person name="Griffiths-Jones S."/>
            <person name="Grocock R."/>
            <person name="Hammond S."/>
            <person name="Harrison E.S.I."/>
            <person name="Hart E."/>
            <person name="Haugen E."/>
            <person name="Heath P.D."/>
            <person name="Holmes S."/>
            <person name="Holt K."/>
            <person name="Howden P.J."/>
            <person name="Hunt A.R."/>
            <person name="Hunt S.E."/>
            <person name="Hunter G."/>
            <person name="Isherwood J."/>
            <person name="James R."/>
            <person name="Johnson C."/>
            <person name="Johnson D."/>
            <person name="Joy A."/>
            <person name="Kay M."/>
            <person name="Kershaw J.K."/>
            <person name="Kibukawa M."/>
            <person name="Kimberley A.M."/>
            <person name="King A."/>
            <person name="Knights A.J."/>
            <person name="Lad H."/>
            <person name="Laird G."/>
            <person name="Lawlor S."/>
            <person name="Leongamornlert D.A."/>
            <person name="Lloyd D.M."/>
            <person name="Loveland J."/>
            <person name="Lovell J."/>
            <person name="Lush M.J."/>
            <person name="Lyne R."/>
            <person name="Martin S."/>
            <person name="Mashreghi-Mohammadi M."/>
            <person name="Matthews L."/>
            <person name="Matthews N.S.W."/>
            <person name="McLaren S."/>
            <person name="Milne S."/>
            <person name="Mistry S."/>
            <person name="Moore M.J.F."/>
            <person name="Nickerson T."/>
            <person name="O'Dell C.N."/>
            <person name="Oliver K."/>
            <person name="Palmeiri A."/>
            <person name="Palmer S.A."/>
            <person name="Parker A."/>
            <person name="Patel D."/>
            <person name="Pearce A.V."/>
            <person name="Peck A.I."/>
            <person name="Pelan S."/>
            <person name="Phelps K."/>
            <person name="Phillimore B.J."/>
            <person name="Plumb R."/>
            <person name="Rajan J."/>
            <person name="Raymond C."/>
            <person name="Rouse G."/>
            <person name="Saenphimmachak C."/>
            <person name="Sehra H.K."/>
            <person name="Sheridan E."/>
            <person name="Shownkeen R."/>
            <person name="Sims S."/>
            <person name="Skuce C.D."/>
            <person name="Smith M."/>
            <person name="Steward C."/>
            <person name="Subramanian S."/>
            <person name="Sycamore N."/>
            <person name="Tracey A."/>
            <person name="Tromans A."/>
            <person name="Van Helmond Z."/>
            <person name="Wall M."/>
            <person name="Wallis J.M."/>
            <person name="White S."/>
            <person name="Whitehead S.L."/>
            <person name="Wilkinson J.E."/>
            <person name="Willey D.L."/>
            <person name="Williams H."/>
            <person name="Wilming L."/>
            <person name="Wray P.W."/>
            <person name="Wu Z."/>
            <person name="Coulson A."/>
            <person name="Vaudin M."/>
            <person name="Sulston J.E."/>
            <person name="Durbin R.M."/>
            <person name="Hubbard T."/>
            <person name="Wooster R."/>
            <person name="Dunham I."/>
            <person name="Carter N.P."/>
            <person name="McVean G."/>
            <person name="Ross M.T."/>
            <person name="Harrow J."/>
            <person name="Olson M.V."/>
            <person name="Beck S."/>
            <person name="Rogers J."/>
            <person name="Bentley D.R."/>
        </authorList>
    </citation>
    <scope>NUCLEOTIDE SEQUENCE [LARGE SCALE GENOMIC DNA]</scope>
</reference>
<reference key="5">
    <citation type="submission" date="2005-07" db="EMBL/GenBank/DDBJ databases">
        <authorList>
            <person name="Mural R.J."/>
            <person name="Istrail S."/>
            <person name="Sutton G.G."/>
            <person name="Florea L."/>
            <person name="Halpern A.L."/>
            <person name="Mobarry C.M."/>
            <person name="Lippert R."/>
            <person name="Walenz B."/>
            <person name="Shatkay H."/>
            <person name="Dew I."/>
            <person name="Miller J.R."/>
            <person name="Flanigan M.J."/>
            <person name="Edwards N.J."/>
            <person name="Bolanos R."/>
            <person name="Fasulo D."/>
            <person name="Halldorsson B.V."/>
            <person name="Hannenhalli S."/>
            <person name="Turner R."/>
            <person name="Yooseph S."/>
            <person name="Lu F."/>
            <person name="Nusskern D.R."/>
            <person name="Shue B.C."/>
            <person name="Zheng X.H."/>
            <person name="Zhong F."/>
            <person name="Delcher A.L."/>
            <person name="Huson D.H."/>
            <person name="Kravitz S.A."/>
            <person name="Mouchard L."/>
            <person name="Reinert K."/>
            <person name="Remington K.A."/>
            <person name="Clark A.G."/>
            <person name="Waterman M.S."/>
            <person name="Eichler E.E."/>
            <person name="Adams M.D."/>
            <person name="Hunkapiller M.W."/>
            <person name="Myers E.W."/>
            <person name="Venter J.C."/>
        </authorList>
    </citation>
    <scope>NUCLEOTIDE SEQUENCE [LARGE SCALE GENOMIC DNA]</scope>
    <scope>VARIANTS LYS-62 AND LEU-696</scope>
</reference>
<reference key="6">
    <citation type="journal article" date="2004" name="Genome Res.">
        <title>The status, quality, and expansion of the NIH full-length cDNA project: the Mammalian Gene Collection (MGC).</title>
        <authorList>
            <consortium name="The MGC Project Team"/>
        </authorList>
    </citation>
    <scope>NUCLEOTIDE SEQUENCE [LARGE SCALE MRNA] OF 1-462 (ISOFORM 1)</scope>
    <scope>VARIANTS LYS-62; ASN-238 AND LYS-410</scope>
    <source>
        <tissue>Brain</tissue>
        <tissue>Testis</tissue>
    </source>
</reference>
<reference key="7">
    <citation type="journal article" date="2000" name="Cancer Lett.">
        <title>Expression of cancer-testis antigens in lung cancer: definition of bromodomain testis-specific gene (BRDT) as a new CT gene, CT9.</title>
        <authorList>
            <person name="Scanlan M.J."/>
            <person name="Altorki N.K."/>
            <person name="Gure A.O."/>
            <person name="Williamson B."/>
            <person name="Jungbluth A."/>
            <person name="Chen Y.-T."/>
            <person name="Old L.J."/>
        </authorList>
    </citation>
    <scope>TISSUE SPECIFICITY</scope>
    <scope>IDENTIFICATION AS A CANCER/TESTIS ANTIGEN</scope>
</reference>
<reference key="8">
    <citation type="journal article" date="2007" name="Nature">
        <title>Patterns of somatic mutation in human cancer genomes.</title>
        <authorList>
            <person name="Greenman C."/>
            <person name="Stephens P."/>
            <person name="Smith R."/>
            <person name="Dalgliesh G.L."/>
            <person name="Hunter C."/>
            <person name="Bignell G."/>
            <person name="Davies H."/>
            <person name="Teague J."/>
            <person name="Butler A."/>
            <person name="Stevens C."/>
            <person name="Edkins S."/>
            <person name="O'Meara S."/>
            <person name="Vastrik I."/>
            <person name="Schmidt E.E."/>
            <person name="Avis T."/>
            <person name="Barthorpe S."/>
            <person name="Bhamra G."/>
            <person name="Buck G."/>
            <person name="Choudhury B."/>
            <person name="Clements J."/>
            <person name="Cole J."/>
            <person name="Dicks E."/>
            <person name="Forbes S."/>
            <person name="Gray K."/>
            <person name="Halliday K."/>
            <person name="Harrison R."/>
            <person name="Hills K."/>
            <person name="Hinton J."/>
            <person name="Jenkinson A."/>
            <person name="Jones D."/>
            <person name="Menzies A."/>
            <person name="Mironenko T."/>
            <person name="Perry J."/>
            <person name="Raine K."/>
            <person name="Richardson D."/>
            <person name="Shepherd R."/>
            <person name="Small A."/>
            <person name="Tofts C."/>
            <person name="Varian J."/>
            <person name="Webb T."/>
            <person name="West S."/>
            <person name="Widaa S."/>
            <person name="Yates A."/>
            <person name="Cahill D.P."/>
            <person name="Louis D.N."/>
            <person name="Goldstraw P."/>
            <person name="Nicholson A.G."/>
            <person name="Brasseur F."/>
            <person name="Looijenga L."/>
            <person name="Weber B.L."/>
            <person name="Chiew Y.-E."/>
            <person name="DeFazio A."/>
            <person name="Greaves M.F."/>
            <person name="Green A.R."/>
            <person name="Campbell P."/>
            <person name="Birney E."/>
            <person name="Easton D.F."/>
            <person name="Chenevix-Trench G."/>
            <person name="Tan M.-H."/>
            <person name="Khoo S.K."/>
            <person name="Teh B.T."/>
            <person name="Yuen S.T."/>
            <person name="Leung S.Y."/>
            <person name="Wooster R."/>
            <person name="Futreal P.A."/>
            <person name="Stratton M.R."/>
        </authorList>
    </citation>
    <scope>VARIANTS [LARGE SCALE ANALYSIS] PHE-2; GLN-6; VAL-89; ASN-238; TYR-288; LYS-357; LYS-410 AND ALA-542</scope>
</reference>
<reference key="9">
    <citation type="journal article" date="2010" name="Reproduction">
        <title>The interaction of modified histones with the bromodomain testis-specific (BRDT) gene and its mRNA level in sperm of fertile donors and subfertile men.</title>
        <authorList>
            <person name="Steilmann C."/>
            <person name="Cavalcanti M.C."/>
            <person name="Bartkuhn M."/>
            <person name="Pons-Kuhnemann J."/>
            <person name="Schuppe H.C."/>
            <person name="Weidner W."/>
            <person name="Steger K."/>
            <person name="Paradowska A."/>
        </authorList>
    </citation>
    <scope>SUBCELLULAR LOCATION</scope>
</reference>
<reference key="10">
    <citation type="journal article" date="2012" name="Biol. Pharm. Bull.">
        <title>The conserved 12-amino acid stretch in the inter-bromodomain region of BET family proteins functions as a nuclear localization signal.</title>
        <authorList>
            <person name="Fukazawa H."/>
            <person name="Masumi A."/>
        </authorList>
    </citation>
    <scope>SUBCELLULAR LOCATION</scope>
    <scope>MOTIF NUCLEAR LOCALIZATION SIGNAL</scope>
</reference>
<reference key="11">
    <citation type="journal article" date="2015" name="Genes Dev.">
        <title>Screen identifies bromodomain protein ZMYND8 in chromatin recognition of transcription-associated DNA damage that promotes homologous recombination.</title>
        <authorList>
            <person name="Gong F."/>
            <person name="Chiu L.Y."/>
            <person name="Cox B."/>
            <person name="Aymard F."/>
            <person name="Clouaire T."/>
            <person name="Leung J.W."/>
            <person name="Cammarata M."/>
            <person name="Perez M."/>
            <person name="Agarwal P."/>
            <person name="Brodbelt J.S."/>
            <person name="Legube G."/>
            <person name="Miller K.M."/>
        </authorList>
    </citation>
    <scope>SUBCELLULAR LOCATION</scope>
</reference>
<reference evidence="23" key="12">
    <citation type="journal article" date="2012" name="Cell">
        <title>Histone recognition and large-scale structural analysis of the human bromodomain family.</title>
        <authorList>
            <person name="Filippakopoulos P."/>
            <person name="Picaud S."/>
            <person name="Mangos M."/>
            <person name="Keates T."/>
            <person name="Lambert J.P."/>
            <person name="Barsyte-Lovejoy D."/>
            <person name="Felletar I."/>
            <person name="Volkmer R."/>
            <person name="Muller S."/>
            <person name="Pawson T."/>
            <person name="Gingras A.C."/>
            <person name="Arrowsmith C.H."/>
            <person name="Knapp S."/>
        </authorList>
    </citation>
    <scope>X-RAY CRYSTALLOGRAPHY (2.05 ANGSTROMS) OF 21-137</scope>
    <scope>FUNCTION</scope>
    <scope>SUBUNIT</scope>
    <scope>DOMAIN</scope>
</reference>
<reference evidence="24" key="13">
    <citation type="journal article" date="2012" name="Cell">
        <title>Small-molecule inhibition of BRDT for male contraception.</title>
        <authorList>
            <person name="Matzuk M.M."/>
            <person name="McKeown M.R."/>
            <person name="Filippakopoulos P."/>
            <person name="Li Q."/>
            <person name="Ma L."/>
            <person name="Agno J.E."/>
            <person name="Lemieux M.E."/>
            <person name="Picaud S."/>
            <person name="Yu R.N."/>
            <person name="Qi J."/>
            <person name="Knapp S."/>
            <person name="Bradner J.E."/>
        </authorList>
    </citation>
    <scope>X-RAY CRYSTALLOGRAPHY (2.23 ANGSTROMS) OF 21-137 IN COMPLEX WITH JQ1</scope>
    <scope>SUBCELLULAR LOCATION</scope>
    <scope>FUNCTION</scope>
</reference>
<reference key="14">
    <citation type="journal article" date="2017" name="Oncotarget">
        <title>Whole-exome sequencing identified a homozygous BRDT mutation in a patient with acephalic spermatozoa.</title>
        <authorList>
            <person name="Li L."/>
            <person name="Sha Y."/>
            <person name="Wang X."/>
            <person name="Li P."/>
            <person name="Wang J."/>
            <person name="Kee K."/>
            <person name="Wang B."/>
        </authorList>
    </citation>
    <scope>VARIANT SPGF21 ASP-928</scope>
    <scope>CHARACTERIZATION OF VARIANT SPGF21 ASP-928</scope>
</reference>
<sequence length="947" mass="107954">MSLPSRQTAIIVNPPPPEYINTKKNGRLTNQLQYLQKVVLKDLWKHSFSWPFQRPVDAVKLQLPDYYTIIKNPMDLNTIKKRLENKYYAKASECIEDFNTMFSNCYLYNKPGDDIVLMAQALEKLFMQKLSQMPQEEQVVGVKERIKKGTQQNIAVSSAKEKSSPSATEKVFKQQEIPSVFPKTSISPLNVVQGASVNSSSQTAAQVTKGVKRKADTTTPATSAVKASSEFSPTFTEKSVALPPIKENMPKNVLPDSQQQYNVVKTVKVTEQLRHCSEILKEMLAKKHFSYAWPFYNPVDVNALGLHNYYDVVKNPMDLGTIKEKMDNQEYKDAYKFAADVRLMFMNCYKYNPPDHEVVTMARMLQDVFETHFSKIPIEPVESMPLCYIKTDITETTGRENTNEASSEGNSSDDSEDERVKRLAKLQEQLKAVHQQLQVLSQVPFRKLNKKKEKSKKEKKKEKVNNSNENPRKMCEQMRLKEKSKRNQPKKRKQQFIGLKSEDEDNAKPMNYDEKRQLSLNINKLPGDKLGRVVHIIQSREPSLSNSNPDEIEIDFETLKASTLRELEKYVSACLRKRPLKPPAKKIMMSKEELHSQKKQELEKRLLDVNNQLNSRKRQTKSDKTQPSKAVENVSRLSESSSSSSSSSESESSSSDLSSSDSSDSESEMFPKFTEVKPNDSPSKENVKKMKNECIPPEGRTGVTQIGYCVQDTTSANTTLVHQTTPSHVMPPNHHQLAFNYQELEHLQTVKNISPLQILPPSGDSEQLSNGITVMHPSGDSDTTMLESECQAPVQKDIKIKNADSWKSLGKPVKPSGVMKSSDELFNQFRKAAIEKEVKARTQELIRKHLEQNTKELKASQENQRDLGNGLTVESFSNKIQNKCSGEEQKEHQQSSEAQDKSKLWLLKDRDLARQKEQERRRREAMVGTIDMTLQSDIMTMFENNFD</sequence>
<comment type="function">
    <text evidence="1 9 12 13 17">Testis-specific chromatin protein that specifically binds histone H4 acetylated at 'Lys-5' and 'Lys-8' (H4K5ac and H4K8ac, respectively) and plays a key role in spermatogenesis (PubMed:22464331, PubMed:22901802). Required in late pachytene spermatocytes: plays a role in meiotic and post-meiotic cells by binding to acetylated histones at the promoter of specific meiotic and post-meiotic genes, facilitating their activation at the appropriate time (PubMed:22901802). In the post-meiotic phase of spermatogenesis, binds to hyperacetylated histones and participates in their general removal from DNA (PubMed:22901802). Also recognizes and binds a subset of butyrylated histones: able to bind histone H4 butyrylated at 'Lys-8' (H4K8ac), while it is not able to bind H4 butyrylated at 'Lys-5' (H4K5ac) (By similarity). Also acts as a component of the splicing machinery in pachytene spermatocytes and round spermatids and participates in 3'-UTR truncation of specific mRNAs in post-meiotic spermatids (By similarity). Required for chromocenter organization, a structure comprised of peri-centromeric heterochromatin.</text>
</comment>
<comment type="subunit">
    <text evidence="1 12 13">Interacts with mRNA splicing machinery proteins SRSF2, DDX5, HNRNPK and TARDBP. Interacts with the acetylated N-terminus of histone H1, H2, H3 and H4. Interacts with P-TEFb components CDK9 and CCNT1/cyclin-T1. Interacts with SMARCE1 (By similarity). Interacts with the acetylated N-terminus of histone H1.4, H2A, H2B, H3 and H4.</text>
</comment>
<comment type="subcellular location">
    <subcellularLocation>
        <location evidence="11 13 14 15">Nucleus</location>
    </subcellularLocation>
    <text evidence="1">Detected on chromatin.</text>
</comment>
<comment type="alternative products">
    <event type="alternative splicing"/>
    <isoform>
        <id>Q58F21-1</id>
        <name>1</name>
        <sequence type="displayed"/>
    </isoform>
    <isoform>
        <id>Q58F21-2</id>
        <name>2</name>
        <name>BRDT-NY</name>
        <sequence type="described" ref="VSP_019118"/>
    </isoform>
    <isoform>
        <id>Q58F21-3</id>
        <name>3</name>
        <sequence type="described" ref="VSP_044511"/>
    </isoform>
    <isoform>
        <id>Q58F21-4</id>
        <name>4</name>
        <sequence type="described" ref="VSP_044510"/>
    </isoform>
    <isoform>
        <id>Q58F21-5</id>
        <name>5</name>
        <sequence type="described" ref="VSP_044509"/>
    </isoform>
</comment>
<comment type="tissue specificity">
    <text evidence="6 9 17">Testis-specific. A 3-fold higher expression is seen in adult testis than in embryo testis. Expression seems to be correlated with histone H4 hyperacetylation during the haploid phase of spermatogenesis (spermiogenesis). No expression, or very low expression is seen in patients' testes with abnormal spermatogenesis. Expressed in cancers such as non-small cell lung cancer and squamous cell carcinomas of the head and neck as well as of esophagus, but not in melanoma or in cancers of the colon, breast, kidney and bladder.</text>
</comment>
<comment type="developmental stage">
    <text>Expressed in embryo testis.</text>
</comment>
<comment type="domain">
    <text evidence="1 12 13">Bromo domains mediate interaction with histones that have acetylated lysine residues at specific positions (PubMed:22464331). Bromo domain 1 mediates binding with histone H4 acetylated at 'Lys-5' and 'Lys-8' (H4K5ac and H4K8ac, respectively) (PubMed:22901802). The bromo domains also recognize and bind a subset of butyrylated histones: able to bind histone H4 butyrylated at 'Lys-8' (H4K8ac), while it is not able to bind H4 butyrylated at 'Lys-5' (H4K5ac) (By similarity).</text>
</comment>
<comment type="PTM">
    <text evidence="1">Ubiquitinated in a SPOP-dependent manner, leading to proteasomal degradation.</text>
</comment>
<comment type="disease" evidence="16">
    <disease id="DI-05077">
        <name>Spermatogenic failure 21</name>
        <acronym>SPGF21</acronym>
        <description>An infertility disorder caused by spermatogenesis defects and characterized by acephalic spermatozoa in the semen of affected individuals. SPGF21 inheritance is autosomal recessive.</description>
        <dbReference type="MIM" id="617644"/>
    </disease>
    <text>The disease is caused by variants affecting the gene represented in this entry.</text>
</comment>
<comment type="miscellaneous">
    <text evidence="22">BRDT is a promising target for male contraception. Inhibition by thienodiazepine inhibitor (+)-JQ1 that binds Asn-109, prevents recognition of acetylated histone H4, causing a complete and reversible contraceptive effect in male mice (PubMed:22901802).</text>
</comment>
<comment type="similarity">
    <text evidence="21">Belongs to the BET family.</text>
</comment>
<comment type="sequence caution" evidence="21">
    <conflict type="miscellaneous discrepancy">
        <sequence resource="EMBL-CDS" id="AAH05281"/>
    </conflict>
    <text>Contaminating sequence. Potential poly-A sequence.</text>
</comment>
<comment type="sequence caution" evidence="21">
    <conflict type="miscellaneous discrepancy">
        <sequence resource="EMBL-CDS" id="AAH47900"/>
    </conflict>
    <text>Contaminating sequence. Potential poly-A sequence.</text>
</comment>
<comment type="sequence caution" evidence="21">
    <conflict type="miscellaneous discrepancy">
        <sequence resource="EMBL-CDS" id="AAH62700"/>
    </conflict>
    <text>Contaminating sequence. Potential poly-A sequence.</text>
</comment>
<comment type="online information" name="Protein Spotlight">
    <link uri="https://www.proteinspotlight.org/back_issues/144"/>
    <text>Asking life to be patient - Issue 144 of November 2012</text>
</comment>
<organism>
    <name type="scientific">Homo sapiens</name>
    <name type="common">Human</name>
    <dbReference type="NCBI Taxonomy" id="9606"/>
    <lineage>
        <taxon>Eukaryota</taxon>
        <taxon>Metazoa</taxon>
        <taxon>Chordata</taxon>
        <taxon>Craniata</taxon>
        <taxon>Vertebrata</taxon>
        <taxon>Euteleostomi</taxon>
        <taxon>Mammalia</taxon>
        <taxon>Eutheria</taxon>
        <taxon>Euarchontoglires</taxon>
        <taxon>Primates</taxon>
        <taxon>Haplorrhini</taxon>
        <taxon>Catarrhini</taxon>
        <taxon>Hominidae</taxon>
        <taxon>Homo</taxon>
    </lineage>
</organism>
<name>BRDT_HUMAN</name>
<gene>
    <name type="primary">BRDT</name>
</gene>
<dbReference type="EMBL" id="AF019085">
    <property type="protein sequence ID" value="AAB87862.1"/>
    <property type="molecule type" value="mRNA"/>
</dbReference>
<dbReference type="EMBL" id="AY338951">
    <property type="protein sequence ID" value="AAQ16198.1"/>
    <property type="molecule type" value="mRNA"/>
</dbReference>
<dbReference type="EMBL" id="AK303008">
    <property type="protein sequence ID" value="BAH13876.1"/>
    <property type="molecule type" value="mRNA"/>
</dbReference>
<dbReference type="EMBL" id="AK302758">
    <property type="protein sequence ID" value="BAH13797.1"/>
    <property type="molecule type" value="mRNA"/>
</dbReference>
<dbReference type="EMBL" id="AK316442">
    <property type="protein sequence ID" value="BAH14813.1"/>
    <property type="molecule type" value="mRNA"/>
</dbReference>
<dbReference type="EMBL" id="AC114486">
    <property type="status" value="NOT_ANNOTATED_CDS"/>
    <property type="molecule type" value="Genomic_DNA"/>
</dbReference>
<dbReference type="EMBL" id="CH471097">
    <property type="protein sequence ID" value="EAW73106.1"/>
    <property type="molecule type" value="Genomic_DNA"/>
</dbReference>
<dbReference type="EMBL" id="CH471097">
    <property type="protein sequence ID" value="EAW73107.1"/>
    <property type="molecule type" value="Genomic_DNA"/>
</dbReference>
<dbReference type="EMBL" id="CH471097">
    <property type="protein sequence ID" value="EAW73108.1"/>
    <property type="molecule type" value="Genomic_DNA"/>
</dbReference>
<dbReference type="EMBL" id="CH471097">
    <property type="protein sequence ID" value="EAW73110.1"/>
    <property type="molecule type" value="Genomic_DNA"/>
</dbReference>
<dbReference type="EMBL" id="CH471097">
    <property type="protein sequence ID" value="EAW73111.1"/>
    <property type="molecule type" value="Genomic_DNA"/>
</dbReference>
<dbReference type="EMBL" id="BC005281">
    <property type="protein sequence ID" value="AAH05281.1"/>
    <property type="status" value="ALT_SEQ"/>
    <property type="molecule type" value="mRNA"/>
</dbReference>
<dbReference type="EMBL" id="BC017582">
    <property type="protein sequence ID" value="AAH17582.1"/>
    <property type="molecule type" value="mRNA"/>
</dbReference>
<dbReference type="EMBL" id="BC047900">
    <property type="protein sequence ID" value="AAH47900.1"/>
    <property type="status" value="ALT_SEQ"/>
    <property type="molecule type" value="mRNA"/>
</dbReference>
<dbReference type="EMBL" id="BC062700">
    <property type="protein sequence ID" value="AAH62700.1"/>
    <property type="status" value="ALT_SEQ"/>
    <property type="molecule type" value="mRNA"/>
</dbReference>
<dbReference type="CCDS" id="CCDS55615.1">
    <molecule id="Q58F21-4"/>
</dbReference>
<dbReference type="CCDS" id="CCDS55616.1">
    <molecule id="Q58F21-5"/>
</dbReference>
<dbReference type="CCDS" id="CCDS735.1">
    <molecule id="Q58F21-1"/>
</dbReference>
<dbReference type="RefSeq" id="NP_001229734.2">
    <molecule id="Q58F21-1"/>
    <property type="nucleotide sequence ID" value="NM_001242805.2"/>
</dbReference>
<dbReference type="RefSeq" id="NP_001229735.2">
    <molecule id="Q58F21-3"/>
    <property type="nucleotide sequence ID" value="NM_001242806.2"/>
</dbReference>
<dbReference type="RefSeq" id="NP_001229736.2">
    <molecule id="Q58F21-4"/>
    <property type="nucleotide sequence ID" value="NM_001242807.2"/>
</dbReference>
<dbReference type="RefSeq" id="NP_001229737.2">
    <molecule id="Q58F21-4"/>
    <property type="nucleotide sequence ID" value="NM_001242808.2"/>
</dbReference>
<dbReference type="RefSeq" id="NP_001229739.2">
    <molecule id="Q58F21-5"/>
    <property type="nucleotide sequence ID" value="NM_001242810.2"/>
</dbReference>
<dbReference type="RefSeq" id="NP_001717.3">
    <molecule id="Q58F21-1"/>
    <property type="nucleotide sequence ID" value="NM_001726.4"/>
</dbReference>
<dbReference type="RefSeq" id="NP_997072.2">
    <molecule id="Q58F21-1"/>
    <property type="nucleotide sequence ID" value="NM_207189.4"/>
</dbReference>
<dbReference type="RefSeq" id="XP_006710916.1">
    <property type="nucleotide sequence ID" value="XM_006710853.3"/>
</dbReference>
<dbReference type="RefSeq" id="XP_006710917.1">
    <property type="nucleotide sequence ID" value="XM_006710854.3"/>
</dbReference>
<dbReference type="RefSeq" id="XP_006710918.1">
    <molecule id="Q58F21-1"/>
    <property type="nucleotide sequence ID" value="XM_006710855.5"/>
</dbReference>
<dbReference type="RefSeq" id="XP_006710919.1">
    <molecule id="Q58F21-1"/>
    <property type="nucleotide sequence ID" value="XM_006710856.5"/>
</dbReference>
<dbReference type="RefSeq" id="XP_006710920.1">
    <property type="nucleotide sequence ID" value="XM_006710857.3"/>
</dbReference>
<dbReference type="RefSeq" id="XP_011540334.1">
    <molecule id="Q58F21-1"/>
    <property type="nucleotide sequence ID" value="XM_011542032.4"/>
</dbReference>
<dbReference type="RefSeq" id="XP_011540335.1">
    <property type="nucleotide sequence ID" value="XM_011542033.2"/>
</dbReference>
<dbReference type="RefSeq" id="XP_011540336.1">
    <molecule id="Q58F21-1"/>
    <property type="nucleotide sequence ID" value="XM_011542034.4"/>
</dbReference>
<dbReference type="RefSeq" id="XP_011540337.1">
    <molecule id="Q58F21-1"/>
    <property type="nucleotide sequence ID" value="XM_011542035.4"/>
</dbReference>
<dbReference type="RefSeq" id="XP_011540338.1">
    <molecule id="Q58F21-1"/>
    <property type="nucleotide sequence ID" value="XM_011542036.4"/>
</dbReference>
<dbReference type="RefSeq" id="XP_047284905.1">
    <molecule id="Q58F21-1"/>
    <property type="nucleotide sequence ID" value="XM_047428949.1"/>
</dbReference>
<dbReference type="RefSeq" id="XP_047284911.1">
    <molecule id="Q58F21-1"/>
    <property type="nucleotide sequence ID" value="XM_047428955.1"/>
</dbReference>
<dbReference type="RefSeq" id="XP_047284923.1">
    <molecule id="Q58F21-1"/>
    <property type="nucleotide sequence ID" value="XM_047428967.1"/>
</dbReference>
<dbReference type="PDB" id="2RFJ">
    <property type="method" value="X-ray"/>
    <property type="resolution" value="2.05 A"/>
    <property type="chains" value="A/B/C=21-137"/>
</dbReference>
<dbReference type="PDB" id="4FLP">
    <property type="method" value="X-ray"/>
    <property type="resolution" value="2.23 A"/>
    <property type="chains" value="A/B=21-137"/>
</dbReference>
<dbReference type="PDB" id="4KCX">
    <property type="method" value="X-ray"/>
    <property type="resolution" value="2.00 A"/>
    <property type="chains" value="A/B=21-137"/>
</dbReference>
<dbReference type="PDB" id="5VBQ">
    <property type="method" value="X-ray"/>
    <property type="resolution" value="1.65 A"/>
    <property type="chains" value="A/B=29-137"/>
</dbReference>
<dbReference type="PDB" id="5VBR">
    <property type="method" value="X-ray"/>
    <property type="resolution" value="1.90 A"/>
    <property type="chains" value="A/B=29-137"/>
</dbReference>
<dbReference type="PDB" id="7BJY">
    <property type="method" value="X-ray"/>
    <property type="resolution" value="2.22 A"/>
    <property type="chains" value="A/B=29-137"/>
</dbReference>
<dbReference type="PDB" id="7L73">
    <property type="method" value="X-ray"/>
    <property type="resolution" value="1.46 A"/>
    <property type="chains" value="A=29-137"/>
</dbReference>
<dbReference type="PDB" id="7L99">
    <property type="method" value="X-ray"/>
    <property type="resolution" value="1.90 A"/>
    <property type="chains" value="A/B/C/D=269-380"/>
</dbReference>
<dbReference type="PDB" id="7L9A">
    <property type="method" value="X-ray"/>
    <property type="resolution" value="2.27 A"/>
    <property type="chains" value="A/B=269-380"/>
</dbReference>
<dbReference type="PDB" id="7LEJ">
    <property type="method" value="X-ray"/>
    <property type="resolution" value="1.73 A"/>
    <property type="chains" value="A=266-378"/>
</dbReference>
<dbReference type="PDB" id="7LEK">
    <property type="method" value="X-ray"/>
    <property type="resolution" value="2.75 A"/>
    <property type="chains" value="A/B/C/D=266-378"/>
</dbReference>
<dbReference type="PDB" id="7LEL">
    <property type="method" value="X-ray"/>
    <property type="resolution" value="2.15 A"/>
    <property type="chains" value="A/B/C/D=266-378"/>
</dbReference>
<dbReference type="PDB" id="7LEM">
    <property type="method" value="X-ray"/>
    <property type="resolution" value="1.89 A"/>
    <property type="chains" value="A/B=29-137"/>
</dbReference>
<dbReference type="PDB" id="7MRC">
    <property type="method" value="X-ray"/>
    <property type="resolution" value="1.55 A"/>
    <property type="chains" value="A/B=29-137"/>
</dbReference>
<dbReference type="PDB" id="7MRD">
    <property type="method" value="X-ray"/>
    <property type="resolution" value="1.39 A"/>
    <property type="chains" value="A/B=29-137"/>
</dbReference>
<dbReference type="PDB" id="7MRG">
    <property type="method" value="X-ray"/>
    <property type="resolution" value="1.99 A"/>
    <property type="chains" value="A/B=29-137"/>
</dbReference>
<dbReference type="PDB" id="7MRH">
    <property type="method" value="X-ray"/>
    <property type="resolution" value="1.98 A"/>
    <property type="chains" value="A/B=29-137"/>
</dbReference>
<dbReference type="PDB" id="7UBO">
    <property type="method" value="X-ray"/>
    <property type="resolution" value="1.82 A"/>
    <property type="chains" value="A/B/C/D=29-137"/>
</dbReference>
<dbReference type="PDB" id="7UUU">
    <property type="method" value="X-ray"/>
    <property type="resolution" value="1.52 A"/>
    <property type="chains" value="A=29-137"/>
</dbReference>
<dbReference type="PDB" id="8CZA">
    <property type="method" value="X-ray"/>
    <property type="resolution" value="2.96 A"/>
    <property type="chains" value="A/B/C/D/E/F=29-137"/>
</dbReference>
<dbReference type="PDB" id="8YHS">
    <property type="method" value="X-ray"/>
    <property type="resolution" value="1.50 A"/>
    <property type="chains" value="A=21-137"/>
</dbReference>
<dbReference type="PDBsum" id="2RFJ"/>
<dbReference type="PDBsum" id="4FLP"/>
<dbReference type="PDBsum" id="4KCX"/>
<dbReference type="PDBsum" id="5VBQ"/>
<dbReference type="PDBsum" id="5VBR"/>
<dbReference type="PDBsum" id="7BJY"/>
<dbReference type="PDBsum" id="7L73"/>
<dbReference type="PDBsum" id="7L99"/>
<dbReference type="PDBsum" id="7L9A"/>
<dbReference type="PDBsum" id="7LEJ"/>
<dbReference type="PDBsum" id="7LEK"/>
<dbReference type="PDBsum" id="7LEL"/>
<dbReference type="PDBsum" id="7LEM"/>
<dbReference type="PDBsum" id="7MRC"/>
<dbReference type="PDBsum" id="7MRD"/>
<dbReference type="PDBsum" id="7MRG"/>
<dbReference type="PDBsum" id="7MRH"/>
<dbReference type="PDBsum" id="7UBO"/>
<dbReference type="PDBsum" id="7UUU"/>
<dbReference type="PDBsum" id="8CZA"/>
<dbReference type="PDBsum" id="8YHS"/>
<dbReference type="SASBDB" id="Q58F21"/>
<dbReference type="SMR" id="Q58F21"/>
<dbReference type="BioGRID" id="107143">
    <property type="interactions" value="78"/>
</dbReference>
<dbReference type="FunCoup" id="Q58F21">
    <property type="interactions" value="517"/>
</dbReference>
<dbReference type="IntAct" id="Q58F21">
    <property type="interactions" value="2"/>
</dbReference>
<dbReference type="STRING" id="9606.ENSP00000387822"/>
<dbReference type="BindingDB" id="Q58F21"/>
<dbReference type="ChEMBL" id="CHEMBL1795185"/>
<dbReference type="DrugBank" id="DB17021">
    <property type="generic name" value="JQ1"/>
</dbReference>
<dbReference type="DrugCentral" id="Q58F21"/>
<dbReference type="GuidetoPHARMACOLOGY" id="2729"/>
<dbReference type="GlyGen" id="Q58F21">
    <property type="glycosylation" value="1 site, 1 O-linked glycan (1 site)"/>
</dbReference>
<dbReference type="iPTMnet" id="Q58F21"/>
<dbReference type="PhosphoSitePlus" id="Q58F21"/>
<dbReference type="BioMuta" id="BRDT"/>
<dbReference type="DMDM" id="226694198"/>
<dbReference type="jPOST" id="Q58F21"/>
<dbReference type="MassIVE" id="Q58F21"/>
<dbReference type="PaxDb" id="9606-ENSP00000387822"/>
<dbReference type="PeptideAtlas" id="Q58F21"/>
<dbReference type="ProteomicsDB" id="1029"/>
<dbReference type="ProteomicsDB" id="62618">
    <molecule id="Q58F21-1"/>
</dbReference>
<dbReference type="ProteomicsDB" id="62619">
    <molecule id="Q58F21-2"/>
</dbReference>
<dbReference type="Antibodypedia" id="3212">
    <property type="antibodies" value="136 antibodies from 22 providers"/>
</dbReference>
<dbReference type="DNASU" id="676"/>
<dbReference type="Ensembl" id="ENST00000362005.7">
    <molecule id="Q58F21-1"/>
    <property type="protein sequence ID" value="ENSP00000354568.3"/>
    <property type="gene ID" value="ENSG00000137948.19"/>
</dbReference>
<dbReference type="Ensembl" id="ENST00000370389.6">
    <molecule id="Q58F21-5"/>
    <property type="protein sequence ID" value="ENSP00000359416.2"/>
    <property type="gene ID" value="ENSG00000137948.19"/>
</dbReference>
<dbReference type="Ensembl" id="ENST00000394530.7">
    <molecule id="Q58F21-4"/>
    <property type="protein sequence ID" value="ENSP00000378038.3"/>
    <property type="gene ID" value="ENSG00000137948.19"/>
</dbReference>
<dbReference type="Ensembl" id="ENST00000399546.7">
    <molecule id="Q58F21-1"/>
    <property type="protein sequence ID" value="ENSP00000387822.3"/>
    <property type="gene ID" value="ENSG00000137948.19"/>
</dbReference>
<dbReference type="Ensembl" id="ENST00000402388.1">
    <molecule id="Q58F21-1"/>
    <property type="protein sequence ID" value="ENSP00000384051.1"/>
    <property type="gene ID" value="ENSG00000137948.19"/>
</dbReference>
<dbReference type="GeneID" id="676"/>
<dbReference type="KEGG" id="hsa:676"/>
<dbReference type="MANE-Select" id="ENST00000399546.7">
    <property type="protein sequence ID" value="ENSP00000387822.3"/>
    <property type="RefSeq nucleotide sequence ID" value="NM_207189.4"/>
    <property type="RefSeq protein sequence ID" value="NP_997072.2"/>
</dbReference>
<dbReference type="UCSC" id="uc001dol.5">
    <molecule id="Q58F21-1"/>
    <property type="organism name" value="human"/>
</dbReference>
<dbReference type="AGR" id="HGNC:1105"/>
<dbReference type="CTD" id="676"/>
<dbReference type="DisGeNET" id="676"/>
<dbReference type="GeneCards" id="BRDT"/>
<dbReference type="HGNC" id="HGNC:1105">
    <property type="gene designation" value="BRDT"/>
</dbReference>
<dbReference type="HPA" id="ENSG00000137948">
    <property type="expression patterns" value="Tissue enriched (testis)"/>
</dbReference>
<dbReference type="MalaCards" id="BRDT"/>
<dbReference type="MIM" id="602144">
    <property type="type" value="gene"/>
</dbReference>
<dbReference type="MIM" id="617644">
    <property type="type" value="phenotype"/>
</dbReference>
<dbReference type="neXtProt" id="NX_Q58F21"/>
<dbReference type="OpenTargets" id="ENSG00000137948"/>
<dbReference type="PharmGKB" id="PA25418"/>
<dbReference type="VEuPathDB" id="HostDB:ENSG00000137948"/>
<dbReference type="eggNOG" id="KOG1474">
    <property type="taxonomic scope" value="Eukaryota"/>
</dbReference>
<dbReference type="GeneTree" id="ENSGT00940000154549"/>
<dbReference type="HOGENOM" id="CLU_001499_0_0_1"/>
<dbReference type="InParanoid" id="Q58F21"/>
<dbReference type="OMA" id="DFKTMFL"/>
<dbReference type="OrthoDB" id="21449at2759"/>
<dbReference type="PAN-GO" id="Q58F21">
    <property type="GO annotations" value="5 GO annotations based on evolutionary models"/>
</dbReference>
<dbReference type="PhylomeDB" id="Q58F21"/>
<dbReference type="TreeFam" id="TF317345"/>
<dbReference type="PathwayCommons" id="Q58F21"/>
<dbReference type="SignaLink" id="Q58F21"/>
<dbReference type="SIGNOR" id="Q58F21"/>
<dbReference type="BioGRID-ORCS" id="676">
    <property type="hits" value="15 hits in 1166 CRISPR screens"/>
</dbReference>
<dbReference type="ChiTaRS" id="BRDT">
    <property type="organism name" value="human"/>
</dbReference>
<dbReference type="EvolutionaryTrace" id="Q58F21"/>
<dbReference type="GeneWiki" id="BRDT"/>
<dbReference type="GenomeRNAi" id="676"/>
<dbReference type="Pharos" id="Q58F21">
    <property type="development level" value="Tchem"/>
</dbReference>
<dbReference type="PRO" id="PR:Q58F21"/>
<dbReference type="Proteomes" id="UP000005640">
    <property type="component" value="Chromosome 1"/>
</dbReference>
<dbReference type="RNAct" id="Q58F21">
    <property type="molecule type" value="protein"/>
</dbReference>
<dbReference type="Bgee" id="ENSG00000137948">
    <property type="expression patterns" value="Expressed in left testis and 97 other cell types or tissues"/>
</dbReference>
<dbReference type="ExpressionAtlas" id="Q58F21">
    <property type="expression patterns" value="baseline and differential"/>
</dbReference>
<dbReference type="GO" id="GO:0000785">
    <property type="term" value="C:chromatin"/>
    <property type="evidence" value="ECO:0000318"/>
    <property type="project" value="GO_Central"/>
</dbReference>
<dbReference type="GO" id="GO:0005634">
    <property type="term" value="C:nucleus"/>
    <property type="evidence" value="ECO:0000314"/>
    <property type="project" value="UniProtKB"/>
</dbReference>
<dbReference type="GO" id="GO:0003682">
    <property type="term" value="F:chromatin binding"/>
    <property type="evidence" value="ECO:0000318"/>
    <property type="project" value="GO_Central"/>
</dbReference>
<dbReference type="GO" id="GO:0042393">
    <property type="term" value="F:histone binding"/>
    <property type="evidence" value="ECO:0000314"/>
    <property type="project" value="UniProtKB"/>
</dbReference>
<dbReference type="GO" id="GO:0140008">
    <property type="term" value="F:histone H4 reader activity"/>
    <property type="evidence" value="ECO:0007669"/>
    <property type="project" value="Ensembl"/>
</dbReference>
<dbReference type="GO" id="GO:0070577">
    <property type="term" value="F:lysine-acetylated histone binding"/>
    <property type="evidence" value="ECO:0007669"/>
    <property type="project" value="Ensembl"/>
</dbReference>
<dbReference type="GO" id="GO:0004674">
    <property type="term" value="F:protein serine/threonine kinase activity"/>
    <property type="evidence" value="ECO:0000318"/>
    <property type="project" value="GO_Central"/>
</dbReference>
<dbReference type="GO" id="GO:0003713">
    <property type="term" value="F:transcription coactivator activity"/>
    <property type="evidence" value="ECO:0000304"/>
    <property type="project" value="ProtInc"/>
</dbReference>
<dbReference type="GO" id="GO:0006338">
    <property type="term" value="P:chromatin remodeling"/>
    <property type="evidence" value="ECO:0000250"/>
    <property type="project" value="UniProtKB"/>
</dbReference>
<dbReference type="GO" id="GO:0007141">
    <property type="term" value="P:male meiosis I"/>
    <property type="evidence" value="ECO:0000250"/>
    <property type="project" value="UniProtKB"/>
</dbReference>
<dbReference type="GO" id="GO:0007140">
    <property type="term" value="P:male meiotic nuclear division"/>
    <property type="evidence" value="ECO:0000250"/>
    <property type="project" value="UniProtKB"/>
</dbReference>
<dbReference type="GO" id="GO:0006397">
    <property type="term" value="P:mRNA processing"/>
    <property type="evidence" value="ECO:0007669"/>
    <property type="project" value="UniProtKB-KW"/>
</dbReference>
<dbReference type="GO" id="GO:0010628">
    <property type="term" value="P:positive regulation of gene expression"/>
    <property type="evidence" value="ECO:0000250"/>
    <property type="project" value="UniProtKB"/>
</dbReference>
<dbReference type="GO" id="GO:0006355">
    <property type="term" value="P:regulation of DNA-templated transcription"/>
    <property type="evidence" value="ECO:0000315"/>
    <property type="project" value="UniProtKB"/>
</dbReference>
<dbReference type="GO" id="GO:0043484">
    <property type="term" value="P:regulation of RNA splicing"/>
    <property type="evidence" value="ECO:0000250"/>
    <property type="project" value="UniProtKB"/>
</dbReference>
<dbReference type="GO" id="GO:0006357">
    <property type="term" value="P:regulation of transcription by RNA polymerase II"/>
    <property type="evidence" value="ECO:0000318"/>
    <property type="project" value="GO_Central"/>
</dbReference>
<dbReference type="GO" id="GO:0008380">
    <property type="term" value="P:RNA splicing"/>
    <property type="evidence" value="ECO:0007669"/>
    <property type="project" value="UniProtKB-KW"/>
</dbReference>
<dbReference type="GO" id="GO:0035092">
    <property type="term" value="P:sperm DNA condensation"/>
    <property type="evidence" value="ECO:0000250"/>
    <property type="project" value="UniProtKB"/>
</dbReference>
<dbReference type="CDD" id="cd05497">
    <property type="entry name" value="Bromo_Brdt_I_like"/>
    <property type="match status" value="1"/>
</dbReference>
<dbReference type="CDD" id="cd05498">
    <property type="entry name" value="Bromo_Brdt_II_like"/>
    <property type="match status" value="1"/>
</dbReference>
<dbReference type="DisProt" id="DP03058"/>
<dbReference type="FunFam" id="1.20.920.10:FF:000003">
    <property type="entry name" value="Bromodomain-containing protein 2"/>
    <property type="match status" value="1"/>
</dbReference>
<dbReference type="FunFam" id="1.20.1270.220:FF:000001">
    <property type="entry name" value="bromodomain-containing protein 2 isoform X1"/>
    <property type="match status" value="1"/>
</dbReference>
<dbReference type="FunFam" id="1.20.920.10:FF:000002">
    <property type="entry name" value="Bromodomain-containing protein 4"/>
    <property type="match status" value="1"/>
</dbReference>
<dbReference type="Gene3D" id="1.20.1270.220">
    <property type="match status" value="1"/>
</dbReference>
<dbReference type="Gene3D" id="1.20.920.10">
    <property type="entry name" value="Bromodomain-like"/>
    <property type="match status" value="2"/>
</dbReference>
<dbReference type="InterPro" id="IPR031354">
    <property type="entry name" value="BRD4_CDT"/>
</dbReference>
<dbReference type="InterPro" id="IPR043508">
    <property type="entry name" value="Bromo_Brdt_I"/>
</dbReference>
<dbReference type="InterPro" id="IPR043509">
    <property type="entry name" value="Bromo_Brdt_II"/>
</dbReference>
<dbReference type="InterPro" id="IPR050935">
    <property type="entry name" value="Bromo_chromatin_reader"/>
</dbReference>
<dbReference type="InterPro" id="IPR001487">
    <property type="entry name" value="Bromodomain"/>
</dbReference>
<dbReference type="InterPro" id="IPR036427">
    <property type="entry name" value="Bromodomain-like_sf"/>
</dbReference>
<dbReference type="InterPro" id="IPR018359">
    <property type="entry name" value="Bromodomain_CS"/>
</dbReference>
<dbReference type="InterPro" id="IPR027353">
    <property type="entry name" value="NET_dom"/>
</dbReference>
<dbReference type="InterPro" id="IPR038336">
    <property type="entry name" value="NET_sf"/>
</dbReference>
<dbReference type="PANTHER" id="PTHR22880:SF175">
    <property type="entry name" value="BROMODOMAIN TESTIS-SPECIFIC PROTEIN"/>
    <property type="match status" value="1"/>
</dbReference>
<dbReference type="PANTHER" id="PTHR22880">
    <property type="entry name" value="FALZ-RELATED BROMODOMAIN-CONTAINING PROTEINS"/>
    <property type="match status" value="1"/>
</dbReference>
<dbReference type="Pfam" id="PF17035">
    <property type="entry name" value="BET"/>
    <property type="match status" value="1"/>
</dbReference>
<dbReference type="Pfam" id="PF17105">
    <property type="entry name" value="BRD4_CDT"/>
    <property type="match status" value="1"/>
</dbReference>
<dbReference type="Pfam" id="PF00439">
    <property type="entry name" value="Bromodomain"/>
    <property type="match status" value="2"/>
</dbReference>
<dbReference type="PRINTS" id="PR00503">
    <property type="entry name" value="BROMODOMAIN"/>
</dbReference>
<dbReference type="SMART" id="SM00297">
    <property type="entry name" value="BROMO"/>
    <property type="match status" value="2"/>
</dbReference>
<dbReference type="SUPFAM" id="SSF47370">
    <property type="entry name" value="Bromodomain"/>
    <property type="match status" value="2"/>
</dbReference>
<dbReference type="PROSITE" id="PS00633">
    <property type="entry name" value="BROMODOMAIN_1"/>
    <property type="match status" value="2"/>
</dbReference>
<dbReference type="PROSITE" id="PS50014">
    <property type="entry name" value="BROMODOMAIN_2"/>
    <property type="match status" value="2"/>
</dbReference>
<dbReference type="PROSITE" id="PS51525">
    <property type="entry name" value="NET"/>
    <property type="match status" value="1"/>
</dbReference>
<keyword id="KW-0002">3D-structure</keyword>
<keyword id="KW-0010">Activator</keyword>
<keyword id="KW-0025">Alternative splicing</keyword>
<keyword id="KW-0103">Bromodomain</keyword>
<keyword id="KW-0156">Chromatin regulator</keyword>
<keyword id="KW-0175">Coiled coil</keyword>
<keyword id="KW-0221">Differentiation</keyword>
<keyword id="KW-0225">Disease variant</keyword>
<keyword id="KW-0469">Meiosis</keyword>
<keyword id="KW-0507">mRNA processing</keyword>
<keyword id="KW-0508">mRNA splicing</keyword>
<keyword id="KW-0539">Nucleus</keyword>
<keyword id="KW-0597">Phosphoprotein</keyword>
<keyword id="KW-1267">Proteomics identification</keyword>
<keyword id="KW-1185">Reference proteome</keyword>
<keyword id="KW-0677">Repeat</keyword>
<keyword id="KW-0744">Spermatogenesis</keyword>
<keyword id="KW-0804">Transcription</keyword>
<keyword id="KW-0805">Transcription regulation</keyword>
<keyword id="KW-0832">Ubl conjugation</keyword>
<feature type="chain" id="PRO_0000239225" description="Bromodomain testis-specific protein">
    <location>
        <begin position="1"/>
        <end position="947"/>
    </location>
</feature>
<feature type="domain" description="Bromo 1" evidence="3">
    <location>
        <begin position="27"/>
        <end position="133"/>
    </location>
</feature>
<feature type="domain" description="Bromo 2" evidence="3">
    <location>
        <begin position="267"/>
        <end position="376"/>
    </location>
</feature>
<feature type="domain" description="NET" evidence="4">
    <location>
        <begin position="500"/>
        <end position="582"/>
    </location>
</feature>
<feature type="region of interest" description="Disordered" evidence="5">
    <location>
        <begin position="202"/>
        <end position="228"/>
    </location>
</feature>
<feature type="region of interest" description="Disordered" evidence="5">
    <location>
        <begin position="395"/>
        <end position="420"/>
    </location>
</feature>
<feature type="region of interest" description="Disordered" evidence="5">
    <location>
        <begin position="444"/>
        <end position="511"/>
    </location>
</feature>
<feature type="region of interest" description="Disordered" evidence="5">
    <location>
        <begin position="610"/>
        <end position="698"/>
    </location>
</feature>
<feature type="region of interest" description="Disordered" evidence="5">
    <location>
        <begin position="882"/>
        <end position="924"/>
    </location>
</feature>
<feature type="coiled-coil region" evidence="2">
    <location>
        <begin position="417"/>
        <end position="470"/>
    </location>
</feature>
<feature type="coiled-coil region" evidence="2">
    <location>
        <begin position="591"/>
        <end position="621"/>
    </location>
</feature>
<feature type="short sequence motif" description="Nuclear localization signal" evidence="14">
    <location>
        <begin position="209"/>
        <end position="220"/>
    </location>
</feature>
<feature type="compositionally biased region" description="Polar residues" evidence="5">
    <location>
        <begin position="217"/>
        <end position="228"/>
    </location>
</feature>
<feature type="compositionally biased region" description="Basic residues" evidence="5">
    <location>
        <begin position="447"/>
        <end position="462"/>
    </location>
</feature>
<feature type="compositionally biased region" description="Basic and acidic residues" evidence="5">
    <location>
        <begin position="470"/>
        <end position="481"/>
    </location>
</feature>
<feature type="compositionally biased region" description="Basic residues" evidence="5">
    <location>
        <begin position="482"/>
        <end position="494"/>
    </location>
</feature>
<feature type="compositionally biased region" description="Low complexity" evidence="5">
    <location>
        <begin position="637"/>
        <end position="662"/>
    </location>
</feature>
<feature type="compositionally biased region" description="Basic and acidic residues" evidence="5">
    <location>
        <begin position="674"/>
        <end position="692"/>
    </location>
</feature>
<feature type="compositionally biased region" description="Basic and acidic residues" evidence="5">
    <location>
        <begin position="885"/>
        <end position="924"/>
    </location>
</feature>
<feature type="binding site" evidence="13 24">
    <location>
        <position position="109"/>
    </location>
    <ligand>
        <name>JQ1</name>
        <dbReference type="ChEBI" id="CHEBI:137113"/>
        <note>inhibitor</note>
    </ligand>
</feature>
<feature type="site" description="Histone H4K5ac binding" evidence="1">
    <location>
        <position position="109"/>
    </location>
</feature>
<feature type="site" description="Histone H4K5ac binding" evidence="1">
    <location>
        <position position="114"/>
    </location>
</feature>
<feature type="modified residue" description="Phosphoserine" evidence="1">
    <location>
        <position position="187"/>
    </location>
</feature>
<feature type="splice variant" id="VSP_044509" description="In isoform 5." evidence="21">
    <location>
        <begin position="1"/>
        <end position="73"/>
    </location>
</feature>
<feature type="splice variant" id="VSP_019118" description="In isoform 2." evidence="20">
    <original>M</original>
    <variation>MTCTCRQDSKQLRM</variation>
    <location>
        <position position="1"/>
    </location>
</feature>
<feature type="splice variant" id="VSP_044510" description="In isoform 4." evidence="19">
    <location>
        <begin position="65"/>
        <end position="110"/>
    </location>
</feature>
<feature type="splice variant" id="VSP_044511" description="In isoform 3." evidence="19">
    <original>K</original>
    <variation>KGKAG</variation>
    <location>
        <position position="148"/>
    </location>
</feature>
<feature type="sequence variant" id="VAR_041924" description="In dbSNP:rs55806733." evidence="10">
    <original>S</original>
    <variation>F</variation>
    <location>
        <position position="2"/>
    </location>
</feature>
<feature type="sequence variant" id="VAR_041925" description="In dbSNP:rs56273490." evidence="10">
    <original>R</original>
    <variation>Q</variation>
    <location>
        <position position="6"/>
    </location>
</feature>
<feature type="sequence variant" id="VAR_026584" description="In dbSNP:rs10783071." evidence="7 8 9 17 18">
    <original>Q</original>
    <variation>K</variation>
    <location>
        <position position="62"/>
    </location>
</feature>
<feature type="sequence variant" id="VAR_041926" description="In a gastric adenocarcinoma sample; somatic mutation; dbSNP:rs781375003." evidence="10">
    <original>A</original>
    <variation>V</variation>
    <location>
        <position position="89"/>
    </location>
</feature>
<feature type="sequence variant" id="VAR_026585" description="In dbSNP:rs1156281." evidence="8 10">
    <original>K</original>
    <variation>N</variation>
    <location>
        <position position="238"/>
    </location>
</feature>
<feature type="sequence variant" id="VAR_041927" description="In a lung neuroendocrine carcinoma sample; somatic mutation." evidence="10">
    <original>H</original>
    <variation>Y</variation>
    <location>
        <position position="288"/>
    </location>
</feature>
<feature type="sequence variant" id="VAR_047327" description="In dbSNP:rs1064567.">
    <original>K</original>
    <variation>T</variation>
    <location>
        <position position="336"/>
    </location>
</feature>
<feature type="sequence variant" id="VAR_041928" description="In dbSNP:rs34674879." evidence="10">
    <original>E</original>
    <variation>K</variation>
    <location>
        <position position="357"/>
    </location>
</feature>
<feature type="sequence variant" id="VAR_026586" description="In dbSNP:rs3088232." evidence="8 10">
    <original>N</original>
    <variation>K</variation>
    <location>
        <position position="410"/>
    </location>
</feature>
<feature type="sequence variant" id="VAR_041929" description="In dbSNP:rs55912588." evidence="10">
    <original>P</original>
    <variation>A</variation>
    <location>
        <position position="542"/>
    </location>
</feature>
<feature type="sequence variant" id="VAR_047328" description="In dbSNP:rs35327986.">
    <original>R</original>
    <variation>Q</variation>
    <location>
        <position position="605"/>
    </location>
</feature>
<feature type="sequence variant" id="VAR_047329" description="In dbSNP:rs10747493." evidence="7 9 17 18">
    <original>P</original>
    <variation>L</variation>
    <location>
        <position position="696"/>
    </location>
</feature>
<feature type="sequence variant" id="VAR_079306" description="In SPGF21; uncertain significance; no effect on protein expression; dbSNP:rs754258809." evidence="16">
    <original>G</original>
    <variation>D</variation>
    <location>
        <position position="928"/>
    </location>
</feature>
<feature type="sequence conflict" description="In Ref. 3; BAH13876." evidence="21" ref="3">
    <original>D</original>
    <variation>N</variation>
    <location>
        <position position="42"/>
    </location>
</feature>
<feature type="sequence conflict" description="In Ref. 6; AAH05281." evidence="21" ref="6">
    <original>P</original>
    <variation>S</variation>
    <location>
        <position position="73"/>
    </location>
</feature>
<feature type="sequence conflict" description="In Ref. 6; AAH62700." evidence="21" ref="6">
    <original>K</original>
    <variation>I</variation>
    <location>
        <position position="80"/>
    </location>
</feature>
<feature type="sequence conflict" description="In Ref. 1; AAB87862." evidence="21" ref="1">
    <original>K</original>
    <variation>E</variation>
    <location>
        <position position="265"/>
    </location>
</feature>
<feature type="sequence conflict" description="In Ref. 1; AAB87862." evidence="21" ref="1">
    <original>K</original>
    <variation>S</variation>
    <location>
        <position position="336"/>
    </location>
</feature>
<feature type="sequence conflict" description="In Ref. 6; AAH17582." evidence="21" ref="6">
    <original>E</original>
    <variation>K</variation>
    <location>
        <position position="462"/>
    </location>
</feature>
<feature type="sequence conflict" description="In Ref. 3; BAH13876." evidence="21" ref="3">
    <original>Q</original>
    <variation>R</variation>
    <location>
        <position position="477"/>
    </location>
</feature>
<feature type="sequence conflict" description="In Ref. 2; AAQ16198." evidence="21" ref="2">
    <original>I</original>
    <variation>M</variation>
    <location>
        <position position="552"/>
    </location>
</feature>
<feature type="sequence conflict" description="In Ref. 1; AAB87862." evidence="21" ref="1">
    <original>N</original>
    <variation>H</variation>
    <location>
        <position position="686"/>
    </location>
</feature>
<feature type="sequence conflict" description="In Ref. 1; AAB87862." evidence="21" ref="1">
    <original>Q</original>
    <variation>P</variation>
    <location>
        <position position="893"/>
    </location>
</feature>
<feature type="sequence conflict" description="In Ref. 1; AAB87862." evidence="21" ref="1">
    <original>Q</original>
    <variation>P</variation>
    <location>
        <position position="915"/>
    </location>
</feature>
<feature type="helix" evidence="28">
    <location>
        <begin position="29"/>
        <end position="37"/>
    </location>
</feature>
<feature type="helix" evidence="28">
    <location>
        <begin position="39"/>
        <end position="45"/>
    </location>
</feature>
<feature type="helix" evidence="28">
    <location>
        <begin position="50"/>
        <end position="52"/>
    </location>
</feature>
<feature type="strand" evidence="25">
    <location>
        <begin position="53"/>
        <end position="55"/>
    </location>
</feature>
<feature type="turn" evidence="28">
    <location>
        <begin position="58"/>
        <end position="62"/>
    </location>
</feature>
<feature type="helix" evidence="28">
    <location>
        <begin position="66"/>
        <end position="69"/>
    </location>
</feature>
<feature type="helix" evidence="28">
    <location>
        <begin position="76"/>
        <end position="84"/>
    </location>
</feature>
<feature type="helix" evidence="28">
    <location>
        <begin position="91"/>
        <end position="108"/>
    </location>
</feature>
<feature type="helix" evidence="28">
    <location>
        <begin position="114"/>
        <end position="131"/>
    </location>
</feature>
<feature type="helix" evidence="27">
    <location>
        <begin position="266"/>
        <end position="284"/>
    </location>
</feature>
<feature type="helix" evidence="27">
    <location>
        <begin position="286"/>
        <end position="288"/>
    </location>
</feature>
<feature type="helix" evidence="27">
    <location>
        <begin position="289"/>
        <end position="292"/>
    </location>
</feature>
<feature type="helix" evidence="27">
    <location>
        <begin position="293"/>
        <end position="295"/>
    </location>
</feature>
<feature type="strand" evidence="26">
    <location>
        <begin position="296"/>
        <end position="298"/>
    </location>
</feature>
<feature type="helix" evidence="27">
    <location>
        <begin position="301"/>
        <end position="304"/>
    </location>
</feature>
<feature type="helix" evidence="27">
    <location>
        <begin position="309"/>
        <end position="312"/>
    </location>
</feature>
<feature type="helix" evidence="27">
    <location>
        <begin position="319"/>
        <end position="327"/>
    </location>
</feature>
<feature type="helix" evidence="27">
    <location>
        <begin position="334"/>
        <end position="351"/>
    </location>
</feature>
<feature type="helix" evidence="27">
    <location>
        <begin position="357"/>
        <end position="373"/>
    </location>
</feature>
<proteinExistence type="evidence at protein level"/>
<evidence type="ECO:0000250" key="1">
    <source>
        <dbReference type="UniProtKB" id="Q91Y44"/>
    </source>
</evidence>
<evidence type="ECO:0000255" key="2"/>
<evidence type="ECO:0000255" key="3">
    <source>
        <dbReference type="PROSITE-ProRule" id="PRU00035"/>
    </source>
</evidence>
<evidence type="ECO:0000255" key="4">
    <source>
        <dbReference type="PROSITE-ProRule" id="PRU00857"/>
    </source>
</evidence>
<evidence type="ECO:0000256" key="5">
    <source>
        <dbReference type="SAM" id="MobiDB-lite"/>
    </source>
</evidence>
<evidence type="ECO:0000269" key="6">
    <source>
    </source>
</evidence>
<evidence type="ECO:0000269" key="7">
    <source>
    </source>
</evidence>
<evidence type="ECO:0000269" key="8">
    <source>
    </source>
</evidence>
<evidence type="ECO:0000269" key="9">
    <source>
    </source>
</evidence>
<evidence type="ECO:0000269" key="10">
    <source>
    </source>
</evidence>
<evidence type="ECO:0000269" key="11">
    <source>
    </source>
</evidence>
<evidence type="ECO:0000269" key="12">
    <source>
    </source>
</evidence>
<evidence type="ECO:0000269" key="13">
    <source>
    </source>
</evidence>
<evidence type="ECO:0000269" key="14">
    <source>
    </source>
</evidence>
<evidence type="ECO:0000269" key="15">
    <source>
    </source>
</evidence>
<evidence type="ECO:0000269" key="16">
    <source>
    </source>
</evidence>
<evidence type="ECO:0000269" key="17">
    <source>
    </source>
</evidence>
<evidence type="ECO:0000269" key="18">
    <source ref="5"/>
</evidence>
<evidence type="ECO:0000303" key="19">
    <source>
    </source>
</evidence>
<evidence type="ECO:0000303" key="20">
    <source>
    </source>
</evidence>
<evidence type="ECO:0000305" key="21"/>
<evidence type="ECO:0000305" key="22">
    <source>
    </source>
</evidence>
<evidence type="ECO:0007744" key="23">
    <source>
        <dbReference type="PDB" id="2RFJ"/>
    </source>
</evidence>
<evidence type="ECO:0007744" key="24">
    <source>
        <dbReference type="PDB" id="4FLP"/>
    </source>
</evidence>
<evidence type="ECO:0007829" key="25">
    <source>
        <dbReference type="PDB" id="2RFJ"/>
    </source>
</evidence>
<evidence type="ECO:0007829" key="26">
    <source>
        <dbReference type="PDB" id="7L99"/>
    </source>
</evidence>
<evidence type="ECO:0007829" key="27">
    <source>
        <dbReference type="PDB" id="7LEJ"/>
    </source>
</evidence>
<evidence type="ECO:0007829" key="28">
    <source>
        <dbReference type="PDB" id="7MRD"/>
    </source>
</evidence>
<protein>
    <recommendedName>
        <fullName>Bromodomain testis-specific protein</fullName>
    </recommendedName>
    <alternativeName>
        <fullName>Cancer/testis antigen 9</fullName>
        <shortName>CT9</shortName>
    </alternativeName>
    <alternativeName>
        <fullName>RING3-like protein</fullName>
    </alternativeName>
</protein>